<reference key="1">
    <citation type="journal article" date="2002" name="Nature">
        <title>The genome sequence of Schizosaccharomyces pombe.</title>
        <authorList>
            <person name="Wood V."/>
            <person name="Gwilliam R."/>
            <person name="Rajandream M.A."/>
            <person name="Lyne M.H."/>
            <person name="Lyne R."/>
            <person name="Stewart A."/>
            <person name="Sgouros J.G."/>
            <person name="Peat N."/>
            <person name="Hayles J."/>
            <person name="Baker S.G."/>
            <person name="Basham D."/>
            <person name="Bowman S."/>
            <person name="Brooks K."/>
            <person name="Brown D."/>
            <person name="Brown S."/>
            <person name="Chillingworth T."/>
            <person name="Churcher C.M."/>
            <person name="Collins M."/>
            <person name="Connor R."/>
            <person name="Cronin A."/>
            <person name="Davis P."/>
            <person name="Feltwell T."/>
            <person name="Fraser A."/>
            <person name="Gentles S."/>
            <person name="Goble A."/>
            <person name="Hamlin N."/>
            <person name="Harris D.E."/>
            <person name="Hidalgo J."/>
            <person name="Hodgson G."/>
            <person name="Holroyd S."/>
            <person name="Hornsby T."/>
            <person name="Howarth S."/>
            <person name="Huckle E.J."/>
            <person name="Hunt S."/>
            <person name="Jagels K."/>
            <person name="James K.D."/>
            <person name="Jones L."/>
            <person name="Jones M."/>
            <person name="Leather S."/>
            <person name="McDonald S."/>
            <person name="McLean J."/>
            <person name="Mooney P."/>
            <person name="Moule S."/>
            <person name="Mungall K.L."/>
            <person name="Murphy L.D."/>
            <person name="Niblett D."/>
            <person name="Odell C."/>
            <person name="Oliver K."/>
            <person name="O'Neil S."/>
            <person name="Pearson D."/>
            <person name="Quail M.A."/>
            <person name="Rabbinowitsch E."/>
            <person name="Rutherford K.M."/>
            <person name="Rutter S."/>
            <person name="Saunders D."/>
            <person name="Seeger K."/>
            <person name="Sharp S."/>
            <person name="Skelton J."/>
            <person name="Simmonds M.N."/>
            <person name="Squares R."/>
            <person name="Squares S."/>
            <person name="Stevens K."/>
            <person name="Taylor K."/>
            <person name="Taylor R.G."/>
            <person name="Tivey A."/>
            <person name="Walsh S.V."/>
            <person name="Warren T."/>
            <person name="Whitehead S."/>
            <person name="Woodward J.R."/>
            <person name="Volckaert G."/>
            <person name="Aert R."/>
            <person name="Robben J."/>
            <person name="Grymonprez B."/>
            <person name="Weltjens I."/>
            <person name="Vanstreels E."/>
            <person name="Rieger M."/>
            <person name="Schaefer M."/>
            <person name="Mueller-Auer S."/>
            <person name="Gabel C."/>
            <person name="Fuchs M."/>
            <person name="Duesterhoeft A."/>
            <person name="Fritzc C."/>
            <person name="Holzer E."/>
            <person name="Moestl D."/>
            <person name="Hilbert H."/>
            <person name="Borzym K."/>
            <person name="Langer I."/>
            <person name="Beck A."/>
            <person name="Lehrach H."/>
            <person name="Reinhardt R."/>
            <person name="Pohl T.M."/>
            <person name="Eger P."/>
            <person name="Zimmermann W."/>
            <person name="Wedler H."/>
            <person name="Wambutt R."/>
            <person name="Purnelle B."/>
            <person name="Goffeau A."/>
            <person name="Cadieu E."/>
            <person name="Dreano S."/>
            <person name="Gloux S."/>
            <person name="Lelaure V."/>
            <person name="Mottier S."/>
            <person name="Galibert F."/>
            <person name="Aves S.J."/>
            <person name="Xiang Z."/>
            <person name="Hunt C."/>
            <person name="Moore K."/>
            <person name="Hurst S.M."/>
            <person name="Lucas M."/>
            <person name="Rochet M."/>
            <person name="Gaillardin C."/>
            <person name="Tallada V.A."/>
            <person name="Garzon A."/>
            <person name="Thode G."/>
            <person name="Daga R.R."/>
            <person name="Cruzado L."/>
            <person name="Jimenez J."/>
            <person name="Sanchez M."/>
            <person name="del Rey F."/>
            <person name="Benito J."/>
            <person name="Dominguez A."/>
            <person name="Revuelta J.L."/>
            <person name="Moreno S."/>
            <person name="Armstrong J."/>
            <person name="Forsburg S.L."/>
            <person name="Cerutti L."/>
            <person name="Lowe T."/>
            <person name="McCombie W.R."/>
            <person name="Paulsen I."/>
            <person name="Potashkin J."/>
            <person name="Shpakovski G.V."/>
            <person name="Ussery D."/>
            <person name="Barrell B.G."/>
            <person name="Nurse P."/>
        </authorList>
    </citation>
    <scope>NUCLEOTIDE SEQUENCE [LARGE SCALE GENOMIC DNA]</scope>
    <source>
        <strain>972 / ATCC 24843</strain>
    </source>
</reference>
<reference key="2">
    <citation type="journal article" date="2000" name="Genes Cells">
        <title>Large-scale screening of intracellular protein localization in living fission yeast cells by the use of a GFP-fusion genomic DNA library.</title>
        <authorList>
            <person name="Ding D.-Q."/>
            <person name="Tomita Y."/>
            <person name="Yamamoto A."/>
            <person name="Chikashige Y."/>
            <person name="Haraguchi T."/>
            <person name="Hiraoka Y."/>
        </authorList>
    </citation>
    <scope>NUCLEOTIDE SEQUENCE [LARGE SCALE GENOMIC DNA] OF 633-836</scope>
    <scope>SUBCELLULAR LOCATION</scope>
    <source>
        <strain>ATCC 38364 / 968</strain>
    </source>
</reference>
<reference key="3">
    <citation type="journal article" date="2005" name="Mol. Cell. Biol.">
        <title>Functional comparison of the Tup11 and Tup12 transcriptional corepressors in fission yeast.</title>
        <authorList>
            <person name="Fagerstroem-Billai F."/>
            <person name="Wright A.P.H."/>
        </authorList>
    </citation>
    <scope>FUNCTION</scope>
    <scope>INTERACTION WITH TUP11 AND TUP12</scope>
</reference>
<reference key="4">
    <citation type="journal article" date="2006" name="Nat. Biotechnol.">
        <title>ORFeome cloning and global analysis of protein localization in the fission yeast Schizosaccharomyces pombe.</title>
        <authorList>
            <person name="Matsuyama A."/>
            <person name="Arai R."/>
            <person name="Yashiroda Y."/>
            <person name="Shirai A."/>
            <person name="Kamata A."/>
            <person name="Sekido S."/>
            <person name="Kobayashi Y."/>
            <person name="Hashimoto A."/>
            <person name="Hamamoto M."/>
            <person name="Hiraoka Y."/>
            <person name="Horinouchi S."/>
            <person name="Yoshida M."/>
        </authorList>
    </citation>
    <scope>SUBCELLULAR LOCATION [LARGE SCALE ANALYSIS]</scope>
</reference>
<reference key="5">
    <citation type="journal article" date="2008" name="J. Proteome Res.">
        <title>Phosphoproteome analysis of fission yeast.</title>
        <authorList>
            <person name="Wilson-Grady J.T."/>
            <person name="Villen J."/>
            <person name="Gygi S.P."/>
        </authorList>
    </citation>
    <scope>PHOSPHORYLATION [LARGE SCALE ANALYSIS] AT SER-893; SER-895; SER-897; SER-898; SER-992; SER-1059 AND SER-1061</scope>
    <scope>IDENTIFICATION BY MASS SPECTROMETRY</scope>
</reference>
<dbReference type="EMBL" id="CU329671">
    <property type="protein sequence ID" value="CAA18877.1"/>
    <property type="molecule type" value="Genomic_DNA"/>
</dbReference>
<dbReference type="EMBL" id="AB027911">
    <property type="protein sequence ID" value="BAA87215.1"/>
    <property type="molecule type" value="Genomic_DNA"/>
</dbReference>
<dbReference type="PIR" id="T39943">
    <property type="entry name" value="T39943"/>
</dbReference>
<dbReference type="RefSeq" id="NP_596609.1">
    <property type="nucleotide sequence ID" value="NM_001022530.2"/>
</dbReference>
<dbReference type="SMR" id="O60184"/>
<dbReference type="BioGRID" id="277181">
    <property type="interactions" value="5"/>
</dbReference>
<dbReference type="FunCoup" id="O60184">
    <property type="interactions" value="135"/>
</dbReference>
<dbReference type="STRING" id="284812.O60184"/>
<dbReference type="iPTMnet" id="O60184"/>
<dbReference type="PaxDb" id="4896-SPBC23E6.09.1"/>
<dbReference type="EnsemblFungi" id="SPBC23E6.09.1">
    <property type="protein sequence ID" value="SPBC23E6.09.1:pep"/>
    <property type="gene ID" value="SPBC23E6.09"/>
</dbReference>
<dbReference type="GeneID" id="2540656"/>
<dbReference type="KEGG" id="spo:2540656"/>
<dbReference type="PomBase" id="SPBC23E6.09">
    <property type="gene designation" value="ssn6"/>
</dbReference>
<dbReference type="VEuPathDB" id="FungiDB:SPBC23E6.09"/>
<dbReference type="eggNOG" id="KOG1124">
    <property type="taxonomic scope" value="Eukaryota"/>
</dbReference>
<dbReference type="HOGENOM" id="CLU_006762_2_1_1"/>
<dbReference type="InParanoid" id="O60184"/>
<dbReference type="OMA" id="IEYYQTI"/>
<dbReference type="Reactome" id="R-SPO-2559580">
    <property type="pathway name" value="Oxidative Stress Induced Senescence"/>
</dbReference>
<dbReference type="Reactome" id="R-SPO-3214842">
    <property type="pathway name" value="HDMs demethylate histones"/>
</dbReference>
<dbReference type="PRO" id="PR:O60184"/>
<dbReference type="Proteomes" id="UP000002485">
    <property type="component" value="Chromosome II"/>
</dbReference>
<dbReference type="GO" id="GO:0000785">
    <property type="term" value="C:chromatin"/>
    <property type="evidence" value="ECO:0000314"/>
    <property type="project" value="PomBase"/>
</dbReference>
<dbReference type="GO" id="GO:0160051">
    <property type="term" value="C:Cyc8(Ssn6)-Tup1 general repressor complex"/>
    <property type="evidence" value="ECO:0000269"/>
    <property type="project" value="PomBase"/>
</dbReference>
<dbReference type="GO" id="GO:0005737">
    <property type="term" value="C:cytoplasm"/>
    <property type="evidence" value="ECO:0007669"/>
    <property type="project" value="UniProtKB-SubCell"/>
</dbReference>
<dbReference type="GO" id="GO:0005634">
    <property type="term" value="C:nucleus"/>
    <property type="evidence" value="ECO:0000314"/>
    <property type="project" value="PomBase"/>
</dbReference>
<dbReference type="GO" id="GO:0017053">
    <property type="term" value="C:transcription repressor complex"/>
    <property type="evidence" value="ECO:0000318"/>
    <property type="project" value="GO_Central"/>
</dbReference>
<dbReference type="GO" id="GO:0031490">
    <property type="term" value="F:chromatin DNA binding"/>
    <property type="evidence" value="ECO:0000318"/>
    <property type="project" value="GO_Central"/>
</dbReference>
<dbReference type="GO" id="GO:0000978">
    <property type="term" value="F:RNA polymerase II cis-regulatory region sequence-specific DNA binding"/>
    <property type="evidence" value="ECO:0000318"/>
    <property type="project" value="GO_Central"/>
</dbReference>
<dbReference type="GO" id="GO:0003714">
    <property type="term" value="F:transcription corepressor activity"/>
    <property type="evidence" value="ECO:0000266"/>
    <property type="project" value="PomBase"/>
</dbReference>
<dbReference type="GO" id="GO:0000122">
    <property type="term" value="P:negative regulation of transcription by RNA polymerase II"/>
    <property type="evidence" value="ECO:0000315"/>
    <property type="project" value="PomBase"/>
</dbReference>
<dbReference type="FunFam" id="1.25.40.10:FF:000403">
    <property type="entry name" value="General transcriptional repressor, putative"/>
    <property type="match status" value="1"/>
</dbReference>
<dbReference type="FunFam" id="1.25.40.10:FF:000078">
    <property type="entry name" value="Transcriptional corepressor Cyc8"/>
    <property type="match status" value="1"/>
</dbReference>
<dbReference type="Gene3D" id="1.25.40.10">
    <property type="entry name" value="Tetratricopeptide repeat domain"/>
    <property type="match status" value="3"/>
</dbReference>
<dbReference type="InterPro" id="IPR051630">
    <property type="entry name" value="Corepressor-Demethylase"/>
</dbReference>
<dbReference type="InterPro" id="IPR011990">
    <property type="entry name" value="TPR-like_helical_dom_sf"/>
</dbReference>
<dbReference type="InterPro" id="IPR019734">
    <property type="entry name" value="TPR_rpt"/>
</dbReference>
<dbReference type="PANTHER" id="PTHR14017:SF1">
    <property type="entry name" value="LD02225P"/>
    <property type="match status" value="1"/>
</dbReference>
<dbReference type="PANTHER" id="PTHR14017">
    <property type="entry name" value="LYSINE-SPECIFIC DEMETHYLASE"/>
    <property type="match status" value="1"/>
</dbReference>
<dbReference type="Pfam" id="PF00515">
    <property type="entry name" value="TPR_1"/>
    <property type="match status" value="1"/>
</dbReference>
<dbReference type="Pfam" id="PF13432">
    <property type="entry name" value="TPR_16"/>
    <property type="match status" value="1"/>
</dbReference>
<dbReference type="Pfam" id="PF13181">
    <property type="entry name" value="TPR_8"/>
    <property type="match status" value="3"/>
</dbReference>
<dbReference type="SMART" id="SM00028">
    <property type="entry name" value="TPR"/>
    <property type="match status" value="10"/>
</dbReference>
<dbReference type="SUPFAM" id="SSF48452">
    <property type="entry name" value="TPR-like"/>
    <property type="match status" value="2"/>
</dbReference>
<dbReference type="PROSITE" id="PS50005">
    <property type="entry name" value="TPR"/>
    <property type="match status" value="9"/>
</dbReference>
<dbReference type="PROSITE" id="PS50293">
    <property type="entry name" value="TPR_REGION"/>
    <property type="match status" value="1"/>
</dbReference>
<proteinExistence type="evidence at protein level"/>
<comment type="function">
    <text evidence="1 3">Acts as a component of the ssn6-tup corepressor complexes, which are involved in the repression of many genes in a wide variety of physiological processes. May also be involved in the derepression of at least some target genes. The complex is recruited to target genes by interaction with DNA-bound transcriptional repressors. The complex recruits histone deacetylases to produce a repressive chromatin structure, interacts with hypoacetylated N-terminal tails of histones H3 and H4 that have been programmed for repression by the action of histone deacetylases and interferes directly with the transcriptional machinery by associating with the RNA polymerase II mediator complex (By similarity).</text>
</comment>
<comment type="subunit">
    <text>Associates independently with tup11 and tup12 to form ssn6-tup corepressor complexes.</text>
</comment>
<comment type="subcellular location">
    <subcellularLocation>
        <location>Cytoplasm</location>
    </subcellularLocation>
    <subcellularLocation>
        <location>Nucleus</location>
    </subcellularLocation>
    <text>Nuclear dots.</text>
</comment>
<comment type="similarity">
    <text evidence="5">Belongs to the CYC8/SSN6 family.</text>
</comment>
<organism>
    <name type="scientific">Schizosaccharomyces pombe (strain 972 / ATCC 24843)</name>
    <name type="common">Fission yeast</name>
    <dbReference type="NCBI Taxonomy" id="284812"/>
    <lineage>
        <taxon>Eukaryota</taxon>
        <taxon>Fungi</taxon>
        <taxon>Dikarya</taxon>
        <taxon>Ascomycota</taxon>
        <taxon>Taphrinomycotina</taxon>
        <taxon>Schizosaccharomycetes</taxon>
        <taxon>Schizosaccharomycetales</taxon>
        <taxon>Schizosaccharomycetaceae</taxon>
        <taxon>Schizosaccharomyces</taxon>
    </lineage>
</organism>
<keyword id="KW-0963">Cytoplasm</keyword>
<keyword id="KW-0539">Nucleus</keyword>
<keyword id="KW-0597">Phosphoprotein</keyword>
<keyword id="KW-1185">Reference proteome</keyword>
<keyword id="KW-0677">Repeat</keyword>
<keyword id="KW-0678">Repressor</keyword>
<keyword id="KW-0802">TPR repeat</keyword>
<keyword id="KW-0804">Transcription</keyword>
<keyword id="KW-0805">Transcription regulation</keyword>
<evidence type="ECO:0000250" key="1"/>
<evidence type="ECO:0000256" key="2">
    <source>
        <dbReference type="SAM" id="MobiDB-lite"/>
    </source>
</evidence>
<evidence type="ECO:0000269" key="3">
    <source>
    </source>
</evidence>
<evidence type="ECO:0000269" key="4">
    <source>
    </source>
</evidence>
<evidence type="ECO:0000305" key="5"/>
<feature type="chain" id="PRO_0000106418" description="General transcriptional corepressor ssn6">
    <location>
        <begin position="1"/>
        <end position="1102"/>
    </location>
</feature>
<feature type="repeat" description="TPR 1">
    <location>
        <begin position="334"/>
        <end position="367"/>
    </location>
</feature>
<feature type="repeat" description="TPR 2">
    <location>
        <begin position="368"/>
        <end position="401"/>
    </location>
</feature>
<feature type="repeat" description="TPR 3">
    <location>
        <begin position="402"/>
        <end position="435"/>
    </location>
</feature>
<feature type="repeat" description="TPR 4">
    <location>
        <begin position="438"/>
        <end position="471"/>
    </location>
</feature>
<feature type="repeat" description="TPR 5">
    <location>
        <begin position="475"/>
        <end position="508"/>
    </location>
</feature>
<feature type="repeat" description="TPR 6">
    <location>
        <begin position="512"/>
        <end position="545"/>
    </location>
</feature>
<feature type="repeat" description="TPR 7">
    <location>
        <begin position="584"/>
        <end position="617"/>
    </location>
</feature>
<feature type="repeat" description="TPR 8">
    <location>
        <begin position="618"/>
        <end position="651"/>
    </location>
</feature>
<feature type="repeat" description="TPR 9">
    <location>
        <begin position="652"/>
        <end position="686"/>
    </location>
</feature>
<feature type="region of interest" description="Disordered" evidence="2">
    <location>
        <begin position="1"/>
        <end position="94"/>
    </location>
</feature>
<feature type="region of interest" description="Disordered" evidence="2">
    <location>
        <begin position="166"/>
        <end position="209"/>
    </location>
</feature>
<feature type="region of interest" description="Disordered" evidence="2">
    <location>
        <begin position="739"/>
        <end position="764"/>
    </location>
</feature>
<feature type="region of interest" description="Disordered" evidence="2">
    <location>
        <begin position="808"/>
        <end position="1102"/>
    </location>
</feature>
<feature type="compositionally biased region" description="Polar residues" evidence="2">
    <location>
        <begin position="1"/>
        <end position="17"/>
    </location>
</feature>
<feature type="compositionally biased region" description="Polar residues" evidence="2">
    <location>
        <begin position="25"/>
        <end position="36"/>
    </location>
</feature>
<feature type="compositionally biased region" description="Low complexity" evidence="2">
    <location>
        <begin position="64"/>
        <end position="84"/>
    </location>
</feature>
<feature type="compositionally biased region" description="Polar residues" evidence="2">
    <location>
        <begin position="85"/>
        <end position="94"/>
    </location>
</feature>
<feature type="compositionally biased region" description="Low complexity" evidence="2">
    <location>
        <begin position="166"/>
        <end position="187"/>
    </location>
</feature>
<feature type="compositionally biased region" description="Low complexity" evidence="2">
    <location>
        <begin position="195"/>
        <end position="205"/>
    </location>
</feature>
<feature type="compositionally biased region" description="Polar residues" evidence="2">
    <location>
        <begin position="751"/>
        <end position="764"/>
    </location>
</feature>
<feature type="compositionally biased region" description="Polar residues" evidence="2">
    <location>
        <begin position="819"/>
        <end position="829"/>
    </location>
</feature>
<feature type="compositionally biased region" description="Basic and acidic residues" evidence="2">
    <location>
        <begin position="849"/>
        <end position="865"/>
    </location>
</feature>
<feature type="compositionally biased region" description="Basic and acidic residues" evidence="2">
    <location>
        <begin position="872"/>
        <end position="887"/>
    </location>
</feature>
<feature type="compositionally biased region" description="Low complexity" evidence="2">
    <location>
        <begin position="889"/>
        <end position="907"/>
    </location>
</feature>
<feature type="compositionally biased region" description="Basic and acidic residues" evidence="2">
    <location>
        <begin position="932"/>
        <end position="941"/>
    </location>
</feature>
<feature type="compositionally biased region" description="Basic and acidic residues" evidence="2">
    <location>
        <begin position="984"/>
        <end position="999"/>
    </location>
</feature>
<feature type="compositionally biased region" description="Polar residues" evidence="2">
    <location>
        <begin position="1002"/>
        <end position="1020"/>
    </location>
</feature>
<feature type="compositionally biased region" description="Low complexity" evidence="2">
    <location>
        <begin position="1021"/>
        <end position="1044"/>
    </location>
</feature>
<feature type="compositionally biased region" description="Polar residues" evidence="2">
    <location>
        <begin position="1057"/>
        <end position="1068"/>
    </location>
</feature>
<feature type="compositionally biased region" description="Acidic residues" evidence="2">
    <location>
        <begin position="1086"/>
        <end position="1096"/>
    </location>
</feature>
<feature type="modified residue" description="Phosphoserine" evidence="4">
    <location>
        <position position="893"/>
    </location>
</feature>
<feature type="modified residue" description="Phosphoserine" evidence="4">
    <location>
        <position position="895"/>
    </location>
</feature>
<feature type="modified residue" description="Phosphoserine" evidence="4">
    <location>
        <position position="897"/>
    </location>
</feature>
<feature type="modified residue" description="Phosphoserine" evidence="4">
    <location>
        <position position="898"/>
    </location>
</feature>
<feature type="modified residue" description="Phosphoserine" evidence="4">
    <location>
        <position position="992"/>
    </location>
</feature>
<feature type="modified residue" description="Phosphoserine" evidence="4">
    <location>
        <position position="1059"/>
    </location>
</feature>
<feature type="modified residue" description="Phosphoserine" evidence="4">
    <location>
        <position position="1061"/>
    </location>
</feature>
<protein>
    <recommendedName>
        <fullName>General transcriptional corepressor ssn6</fullName>
    </recommendedName>
</protein>
<gene>
    <name type="primary">ssn6</name>
    <name type="ORF">SPBC23E6.09</name>
</gene>
<name>CYC8_SCHPO</name>
<sequence length="1102" mass="121517">MPQSQVATASPSQNAQPNHGMGSKVLSSDPNASLPPQTAYYASPLHANSVSLPPSHLPRSTLHPLLSQQQQPAQQSPSLGPAQQNIQQPPSVSIASQPHYAEAIVPIQQVLQPQQYRQLPPNMVAATNAPQQHPQLQRMMPILSSNQPIQQLPLPNQASPYIPVPLQQQQQSQPQQQPQQQQHQQPQQPQPPQQPLQQQQQQRQLHSGIQQPVSTIVSQNGTYYSIPAVNHPMAGQPIAIAPVPAPNQAALPPIPPQALPANGTPNTLASPVTLPAANSAVQNAQPVPMTSSPAMAVVPQNKTAATSTLAAQQGANVLPPNAPESVRHLISLNEETWIQIGRLAELFDDQDKALSAYESALRQNPYSIPAMLQIATILRNREQFPLAIEYYQTILDCDPKQGEIWSALGHCYLMQDDLSRAYSAYRQALYHLKDPKDPKLWYGIGILYDRYGSHEHAEEAFMQCLRMDPNFEKVNEIYFRLGIIYKQQHKFAQSLELFRHILDNPPKPLTVLDIYFQIGHVYEQRKEYKLAKEAYERVLAETPNHAKVLQQLGWLCHQQSSSFTNQDLAIQYLTKSLEADDTDAQSWYLIGRCYVAQQKYNKAYEAYQQAVYRDGRNPTFWCSIGVLYYQINQYQDALDAYSRAIRLNPYISEVWYDLGTLYESCHNQISDALDAYQRAAELDPTNPHIKARLQLLRGPNNEQHKIVNAPPSNVPNVQTAKYINQPGVPYSNVPVAQLSGNWQPPHLPQAQLPSATGQSGVVQQPYQTQPSVTNNNVATQPVIASTVPVQTAAPSSQTAVPQTIHQSNAFTPRGKHASGSRNSISSTKSPQHKLSDQPRSRNNSISNVSHRERSNSVSSKSRETRTSASNESDPKKSTQRDSSKKLENSTVVSGSPSSSSKSDAAKSIKPQKPEPALKPVEGTADPKSTKRNHQETEKTADTDVSSTEPVKRQKTADVNDDVGEEEVKQSVSEQVDSAQLTSEPKSESLPKSPEEKSDDTSNDVTTENTNDINGDSNMDNVATVDKSTDAVDTSTATVAATTTTAEEELPQKESQERSSPSPENQDSTPLAPKSVSPKQAARTLDIDENYDDDEGEKETVSV</sequence>
<accession>O60184</accession>
<accession>Q9USA6</accession>